<keyword id="KW-0408">Iron</keyword>
<keyword id="KW-0409">Iron storage</keyword>
<keyword id="KW-0479">Metal-binding</keyword>
<keyword id="KW-0560">Oxidoreductase</keyword>
<keyword id="KW-1185">Reference proteome</keyword>
<proteinExistence type="evidence at transcript level"/>
<evidence type="ECO:0000255" key="1">
    <source>
        <dbReference type="PROSITE-ProRule" id="PRU00085"/>
    </source>
</evidence>
<evidence type="ECO:0000305" key="2"/>
<organism>
    <name type="scientific">Salmo salar</name>
    <name type="common">Atlantic salmon</name>
    <dbReference type="NCBI Taxonomy" id="8030"/>
    <lineage>
        <taxon>Eukaryota</taxon>
        <taxon>Metazoa</taxon>
        <taxon>Chordata</taxon>
        <taxon>Craniata</taxon>
        <taxon>Vertebrata</taxon>
        <taxon>Euteleostomi</taxon>
        <taxon>Actinopterygii</taxon>
        <taxon>Neopterygii</taxon>
        <taxon>Teleostei</taxon>
        <taxon>Protacanthopterygii</taxon>
        <taxon>Salmoniformes</taxon>
        <taxon>Salmonidae</taxon>
        <taxon>Salmoninae</taxon>
        <taxon>Salmo</taxon>
    </lineage>
</organism>
<dbReference type="EC" id="1.16.3.1"/>
<dbReference type="EMBL" id="S77386">
    <property type="protein sequence ID" value="AAB34576.1"/>
    <property type="molecule type" value="mRNA"/>
</dbReference>
<dbReference type="RefSeq" id="NP_001117130.1">
    <property type="nucleotide sequence ID" value="NM_001123658.1"/>
</dbReference>
<dbReference type="SMR" id="P49947"/>
<dbReference type="STRING" id="8030.ENSSSAP00000009545"/>
<dbReference type="PaxDb" id="8030-ENSSSAP00000009545"/>
<dbReference type="GeneID" id="100136565"/>
<dbReference type="KEGG" id="sasa:100136565"/>
<dbReference type="OrthoDB" id="202767at7898"/>
<dbReference type="Proteomes" id="UP000087266">
    <property type="component" value="Unplaced"/>
</dbReference>
<dbReference type="GO" id="GO:0005737">
    <property type="term" value="C:cytoplasm"/>
    <property type="evidence" value="ECO:0007669"/>
    <property type="project" value="TreeGrafter"/>
</dbReference>
<dbReference type="GO" id="GO:0008199">
    <property type="term" value="F:ferric iron binding"/>
    <property type="evidence" value="ECO:0007669"/>
    <property type="project" value="InterPro"/>
</dbReference>
<dbReference type="GO" id="GO:0008198">
    <property type="term" value="F:ferrous iron binding"/>
    <property type="evidence" value="ECO:0007669"/>
    <property type="project" value="TreeGrafter"/>
</dbReference>
<dbReference type="GO" id="GO:0004322">
    <property type="term" value="F:ferroxidase activity"/>
    <property type="evidence" value="ECO:0007669"/>
    <property type="project" value="UniProtKB-EC"/>
</dbReference>
<dbReference type="GO" id="GO:0006879">
    <property type="term" value="P:intracellular iron ion homeostasis"/>
    <property type="evidence" value="ECO:0007669"/>
    <property type="project" value="UniProtKB-KW"/>
</dbReference>
<dbReference type="GO" id="GO:0006826">
    <property type="term" value="P:iron ion transport"/>
    <property type="evidence" value="ECO:0007669"/>
    <property type="project" value="InterPro"/>
</dbReference>
<dbReference type="CDD" id="cd01056">
    <property type="entry name" value="Euk_Ferritin"/>
    <property type="match status" value="1"/>
</dbReference>
<dbReference type="FunFam" id="1.20.1260.10:FF:000002">
    <property type="entry name" value="Ferritin, mitochondrial"/>
    <property type="match status" value="1"/>
</dbReference>
<dbReference type="Gene3D" id="1.20.1260.10">
    <property type="match status" value="1"/>
</dbReference>
<dbReference type="InterPro" id="IPR001519">
    <property type="entry name" value="Ferritin"/>
</dbReference>
<dbReference type="InterPro" id="IPR012347">
    <property type="entry name" value="Ferritin-like"/>
</dbReference>
<dbReference type="InterPro" id="IPR009040">
    <property type="entry name" value="Ferritin-like_diiron"/>
</dbReference>
<dbReference type="InterPro" id="IPR009078">
    <property type="entry name" value="Ferritin-like_SF"/>
</dbReference>
<dbReference type="InterPro" id="IPR014034">
    <property type="entry name" value="Ferritin_CS"/>
</dbReference>
<dbReference type="InterPro" id="IPR008331">
    <property type="entry name" value="Ferritin_DPS_dom"/>
</dbReference>
<dbReference type="PANTHER" id="PTHR11431">
    <property type="entry name" value="FERRITIN"/>
    <property type="match status" value="1"/>
</dbReference>
<dbReference type="PANTHER" id="PTHR11431:SF54">
    <property type="entry name" value="FERRITIN"/>
    <property type="match status" value="1"/>
</dbReference>
<dbReference type="Pfam" id="PF00210">
    <property type="entry name" value="Ferritin"/>
    <property type="match status" value="1"/>
</dbReference>
<dbReference type="SUPFAM" id="SSF47240">
    <property type="entry name" value="Ferritin-like"/>
    <property type="match status" value="1"/>
</dbReference>
<dbReference type="PROSITE" id="PS00204">
    <property type="entry name" value="FERRITIN_2"/>
    <property type="match status" value="1"/>
</dbReference>
<dbReference type="PROSITE" id="PS50905">
    <property type="entry name" value="FERRITIN_LIKE"/>
    <property type="match status" value="1"/>
</dbReference>
<comment type="function">
    <text>Stores iron in a soluble, non-toxic, readily available form. Important for iron homeostasis. Has ferroxidase activity. Iron is taken up in the ferrous form and deposited as ferric hydroxides after oxidation.</text>
</comment>
<comment type="catalytic activity">
    <reaction>
        <text>4 Fe(2+) + O2 + 4 H(+) = 4 Fe(3+) + 2 H2O</text>
        <dbReference type="Rhea" id="RHEA:11148"/>
        <dbReference type="ChEBI" id="CHEBI:15377"/>
        <dbReference type="ChEBI" id="CHEBI:15378"/>
        <dbReference type="ChEBI" id="CHEBI:15379"/>
        <dbReference type="ChEBI" id="CHEBI:29033"/>
        <dbReference type="ChEBI" id="CHEBI:29034"/>
        <dbReference type="EC" id="1.16.3.1"/>
    </reaction>
</comment>
<comment type="subunit">
    <text>Oligomer of 24 subunits. There are at least two types of subunits. The functional molecule forms a roughly spherical shell with a diameter of 12 nm and contains a central cavity into which the insoluble mineral iron core is deposited.</text>
</comment>
<comment type="tissue specificity">
    <text>Almost exclusively in the gonads.</text>
</comment>
<comment type="similarity">
    <text evidence="2">Belongs to the ferritin family.</text>
</comment>
<name>FRIM_SALSA</name>
<sequence length="176" mass="20528">MESQIRQNYHHDCERAINRMINMEMFASYTYTSMAFYFSRDDVALPGFAHFFKENSEEEREHADKLLSFQNKRGGRILLQDIKKPERDEWGNGLEAMQCALQLEKNVNQALLDLHKIASDKVDPHLCDFLETHYLNEQVEAIKKLGDHITNLTKMDAVKNKMAEYLFDKHTLGGQS</sequence>
<feature type="chain" id="PRO_0000201076" description="Ferritin, middle subunit">
    <location>
        <begin position="1"/>
        <end position="176"/>
    </location>
</feature>
<feature type="domain" description="Ferritin-like diiron" evidence="1">
    <location>
        <begin position="7"/>
        <end position="156"/>
    </location>
</feature>
<feature type="binding site" evidence="1">
    <location>
        <position position="24"/>
    </location>
    <ligand>
        <name>Fe cation</name>
        <dbReference type="ChEBI" id="CHEBI:24875"/>
        <label>1</label>
    </ligand>
</feature>
<feature type="binding site" evidence="1">
    <location>
        <position position="59"/>
    </location>
    <ligand>
        <name>Fe cation</name>
        <dbReference type="ChEBI" id="CHEBI:24875"/>
        <label>1</label>
    </ligand>
</feature>
<feature type="binding site" evidence="1">
    <location>
        <position position="59"/>
    </location>
    <ligand>
        <name>Fe cation</name>
        <dbReference type="ChEBI" id="CHEBI:24875"/>
        <label>2</label>
    </ligand>
</feature>
<feature type="binding site" evidence="1">
    <location>
        <position position="62"/>
    </location>
    <ligand>
        <name>Fe cation</name>
        <dbReference type="ChEBI" id="CHEBI:24875"/>
        <label>1</label>
    </ligand>
</feature>
<feature type="binding site" evidence="1">
    <location>
        <position position="104"/>
    </location>
    <ligand>
        <name>Fe cation</name>
        <dbReference type="ChEBI" id="CHEBI:24875"/>
        <label>2</label>
    </ligand>
</feature>
<feature type="binding site" evidence="1">
    <location>
        <position position="138"/>
    </location>
    <ligand>
        <name>Fe cation</name>
        <dbReference type="ChEBI" id="CHEBI:24875"/>
        <label>2</label>
    </ligand>
</feature>
<protein>
    <recommendedName>
        <fullName>Ferritin, middle subunit</fullName>
        <shortName>Ferritin M</shortName>
        <ecNumber>1.16.3.1</ecNumber>
    </recommendedName>
</protein>
<reference key="1">
    <citation type="journal article" date="1995" name="Mol. Mar. Biol. Biotechnol.">
        <title>Two ferritin subunits of Atlantic salmon (Salmo salar): cloning of the liver cDNAs and antibody preparation.</title>
        <authorList>
            <person name="Andersen O."/>
            <person name="Dehli A."/>
            <person name="Standal H."/>
            <person name="Giskegjerde T.A."/>
            <person name="Karstensen R."/>
            <person name="Roervik K.A."/>
        </authorList>
    </citation>
    <scope>NUCLEOTIDE SEQUENCE [MRNA]</scope>
    <source>
        <tissue>Liver</tissue>
    </source>
</reference>
<accession>P49947</accession>